<comment type="function">
    <text evidence="1 3">Acyl:acyl-carrier protein ligase involved in the biosynthesis of a unique class of isonitrile lipopeptides (INLPs) that seem to function as virulence factors in M.tuberculosis and to play a role in metal acquisition (By similarity). Catalyzes the activation of medium/long-chain fatty acids as acyl-adenylates (acyl-AMP), which are then transferred to the phosphopantetheine arm of the acyl-carrier protein (ACP) MT0109. Acts twice during the INLP pathway, catalyzing the activation of a (2E)-enoyl fatty acid as well as the corresponding (3R)-3-isocyanyl-fatty acid as acyl-adenylates (acyl-AMP), and then the acyl transfer to the dedicated acyl-carrier protein MT0109 (By similarity).</text>
</comment>
<comment type="catalytic activity">
    <reaction evidence="3">
        <text>a medium-chain fatty acid + holo-[ACP] + ATP = a medium-chain fatty acyl-[ACP] + AMP + diphosphate</text>
        <dbReference type="Rhea" id="RHEA:50460"/>
        <dbReference type="Rhea" id="RHEA-COMP:9685"/>
        <dbReference type="Rhea" id="RHEA-COMP:12681"/>
        <dbReference type="ChEBI" id="CHEBI:30616"/>
        <dbReference type="ChEBI" id="CHEBI:33019"/>
        <dbReference type="ChEBI" id="CHEBI:59558"/>
        <dbReference type="ChEBI" id="CHEBI:64479"/>
        <dbReference type="ChEBI" id="CHEBI:133242"/>
        <dbReference type="ChEBI" id="CHEBI:456215"/>
        <dbReference type="EC" id="6.2.1.47"/>
    </reaction>
    <physiologicalReaction direction="left-to-right" evidence="3">
        <dbReference type="Rhea" id="RHEA:50461"/>
    </physiologicalReaction>
</comment>
<comment type="catalytic activity">
    <reaction evidence="3">
        <text>a medium-chain fatty acid + ATP + H(+) = a medium-chain fatty acyl-AMP + diphosphate</text>
        <dbReference type="Rhea" id="RHEA:56920"/>
        <dbReference type="ChEBI" id="CHEBI:15378"/>
        <dbReference type="ChEBI" id="CHEBI:30616"/>
        <dbReference type="ChEBI" id="CHEBI:33019"/>
        <dbReference type="ChEBI" id="CHEBI:59558"/>
        <dbReference type="ChEBI" id="CHEBI:141140"/>
    </reaction>
    <physiologicalReaction direction="left-to-right" evidence="3">
        <dbReference type="Rhea" id="RHEA:56921"/>
    </physiologicalReaction>
</comment>
<comment type="catalytic activity">
    <reaction evidence="3">
        <text>a medium-chain fatty acyl-AMP + holo-[ACP] = a medium-chain fatty acyl-[ACP] + AMP + H(+)</text>
        <dbReference type="Rhea" id="RHEA:63636"/>
        <dbReference type="Rhea" id="RHEA-COMP:9685"/>
        <dbReference type="Rhea" id="RHEA-COMP:12681"/>
        <dbReference type="ChEBI" id="CHEBI:15378"/>
        <dbReference type="ChEBI" id="CHEBI:64479"/>
        <dbReference type="ChEBI" id="CHEBI:133242"/>
        <dbReference type="ChEBI" id="CHEBI:141140"/>
        <dbReference type="ChEBI" id="CHEBI:456215"/>
    </reaction>
    <physiologicalReaction direction="left-to-right" evidence="3">
        <dbReference type="Rhea" id="RHEA:63637"/>
    </physiologicalReaction>
</comment>
<comment type="catalytic activity">
    <reaction evidence="3">
        <text>a long-chain fatty acid + holo-[ACP] + ATP = a long-chain fatty acyl-[ACP] + AMP + diphosphate</text>
        <dbReference type="Rhea" id="RHEA:45588"/>
        <dbReference type="Rhea" id="RHEA-COMP:9685"/>
        <dbReference type="Rhea" id="RHEA-COMP:12682"/>
        <dbReference type="ChEBI" id="CHEBI:30616"/>
        <dbReference type="ChEBI" id="CHEBI:33019"/>
        <dbReference type="ChEBI" id="CHEBI:57560"/>
        <dbReference type="ChEBI" id="CHEBI:64479"/>
        <dbReference type="ChEBI" id="CHEBI:133243"/>
        <dbReference type="ChEBI" id="CHEBI:456215"/>
        <dbReference type="EC" id="6.2.1.20"/>
    </reaction>
    <physiologicalReaction direction="left-to-right" evidence="3">
        <dbReference type="Rhea" id="RHEA:45589"/>
    </physiologicalReaction>
</comment>
<comment type="catalytic activity">
    <reaction evidence="3">
        <text>a long-chain fatty acid + ATP + H(+) = a long-chain fatty acyl-AMP + diphosphate</text>
        <dbReference type="Rhea" id="RHEA:52336"/>
        <dbReference type="ChEBI" id="CHEBI:15378"/>
        <dbReference type="ChEBI" id="CHEBI:30616"/>
        <dbReference type="ChEBI" id="CHEBI:33019"/>
        <dbReference type="ChEBI" id="CHEBI:57560"/>
        <dbReference type="ChEBI" id="CHEBI:136562"/>
    </reaction>
    <physiologicalReaction direction="left-to-right" evidence="3">
        <dbReference type="Rhea" id="RHEA:52337"/>
    </physiologicalReaction>
</comment>
<comment type="catalytic activity">
    <reaction evidence="3">
        <text>a long-chain fatty acyl-AMP + holo-[ACP] = a long-chain fatty acyl-[ACP] + AMP + H(+)</text>
        <dbReference type="Rhea" id="RHEA:63632"/>
        <dbReference type="Rhea" id="RHEA-COMP:9685"/>
        <dbReference type="Rhea" id="RHEA-COMP:12682"/>
        <dbReference type="ChEBI" id="CHEBI:15378"/>
        <dbReference type="ChEBI" id="CHEBI:64479"/>
        <dbReference type="ChEBI" id="CHEBI:133243"/>
        <dbReference type="ChEBI" id="CHEBI:136562"/>
        <dbReference type="ChEBI" id="CHEBI:456215"/>
    </reaction>
    <physiologicalReaction direction="left-to-right" evidence="3">
        <dbReference type="Rhea" id="RHEA:63633"/>
    </physiologicalReaction>
</comment>
<comment type="catalytic activity">
    <reaction evidence="1">
        <text>a (2E)-enoyl fatty acid + holo-[ACP] + ATP = a (2E)-enoyl-[ACP] + AMP + diphosphate</text>
        <dbReference type="Rhea" id="RHEA:74911"/>
        <dbReference type="Rhea" id="RHEA-COMP:9685"/>
        <dbReference type="Rhea" id="RHEA-COMP:9925"/>
        <dbReference type="ChEBI" id="CHEBI:30616"/>
        <dbReference type="ChEBI" id="CHEBI:33019"/>
        <dbReference type="ChEBI" id="CHEBI:64479"/>
        <dbReference type="ChEBI" id="CHEBI:78784"/>
        <dbReference type="ChEBI" id="CHEBI:194103"/>
        <dbReference type="ChEBI" id="CHEBI:456215"/>
    </reaction>
    <physiologicalReaction direction="left-to-right" evidence="1">
        <dbReference type="Rhea" id="RHEA:74912"/>
    </physiologicalReaction>
</comment>
<comment type="catalytic activity">
    <reaction evidence="1">
        <text>a (2E)-enoyl fatty acid + ATP + H(+) = a (2E)-2-fatty-enoyl-AMP + diphosphate</text>
        <dbReference type="Rhea" id="RHEA:74915"/>
        <dbReference type="ChEBI" id="CHEBI:15378"/>
        <dbReference type="ChEBI" id="CHEBI:30616"/>
        <dbReference type="ChEBI" id="CHEBI:33019"/>
        <dbReference type="ChEBI" id="CHEBI:194103"/>
        <dbReference type="ChEBI" id="CHEBI:194106"/>
    </reaction>
    <physiologicalReaction direction="left-to-right" evidence="1">
        <dbReference type="Rhea" id="RHEA:74916"/>
    </physiologicalReaction>
</comment>
<comment type="catalytic activity">
    <reaction evidence="1">
        <text>a (2E)-2-fatty-enoyl-AMP + holo-[ACP] = a (2E)-enoyl-[ACP] + AMP + H(+)</text>
        <dbReference type="Rhea" id="RHEA:74919"/>
        <dbReference type="Rhea" id="RHEA-COMP:9685"/>
        <dbReference type="Rhea" id="RHEA-COMP:9925"/>
        <dbReference type="ChEBI" id="CHEBI:15378"/>
        <dbReference type="ChEBI" id="CHEBI:64479"/>
        <dbReference type="ChEBI" id="CHEBI:78784"/>
        <dbReference type="ChEBI" id="CHEBI:194106"/>
        <dbReference type="ChEBI" id="CHEBI:456215"/>
    </reaction>
    <physiologicalReaction direction="left-to-right" evidence="1">
        <dbReference type="Rhea" id="RHEA:74920"/>
    </physiologicalReaction>
</comment>
<comment type="catalytic activity">
    <reaction evidence="2">
        <text>a (3R)-3-isocyanyl-fatty acid + holo-[ACP] + ATP = a (3R)-3-isocyanyl-fatty acyl-[ACP] + AMP + diphosphate</text>
        <dbReference type="Rhea" id="RHEA:74955"/>
        <dbReference type="Rhea" id="RHEA-COMP:9685"/>
        <dbReference type="Rhea" id="RHEA-COMP:18454"/>
        <dbReference type="ChEBI" id="CHEBI:30616"/>
        <dbReference type="ChEBI" id="CHEBI:33019"/>
        <dbReference type="ChEBI" id="CHEBI:64479"/>
        <dbReference type="ChEBI" id="CHEBI:193084"/>
        <dbReference type="ChEBI" id="CHEBI:194105"/>
        <dbReference type="ChEBI" id="CHEBI:456215"/>
    </reaction>
    <physiologicalReaction direction="left-to-right" evidence="2">
        <dbReference type="Rhea" id="RHEA:74956"/>
    </physiologicalReaction>
</comment>
<comment type="catalytic activity">
    <reaction evidence="2">
        <text>a (3R)-3-isocyanyl-fatty acid + ATP + H(+) = a (3R)-3-isocyanyl-fatty acyl-AMP + diphosphate</text>
        <dbReference type="Rhea" id="RHEA:74967"/>
        <dbReference type="ChEBI" id="CHEBI:15378"/>
        <dbReference type="ChEBI" id="CHEBI:30616"/>
        <dbReference type="ChEBI" id="CHEBI:33019"/>
        <dbReference type="ChEBI" id="CHEBI:193084"/>
        <dbReference type="ChEBI" id="CHEBI:194104"/>
    </reaction>
    <physiologicalReaction direction="left-to-right" evidence="2">
        <dbReference type="Rhea" id="RHEA:74968"/>
    </physiologicalReaction>
</comment>
<comment type="catalytic activity">
    <reaction evidence="2">
        <text>a (3R)-3-isocyanyl-fatty acyl-AMP + holo-[ACP] = a (3R)-3-isocyanyl-fatty acyl-[ACP] + AMP + H(+)</text>
        <dbReference type="Rhea" id="RHEA:74975"/>
        <dbReference type="Rhea" id="RHEA-COMP:9685"/>
        <dbReference type="Rhea" id="RHEA-COMP:18454"/>
        <dbReference type="ChEBI" id="CHEBI:15378"/>
        <dbReference type="ChEBI" id="CHEBI:64479"/>
        <dbReference type="ChEBI" id="CHEBI:194104"/>
        <dbReference type="ChEBI" id="CHEBI:194105"/>
        <dbReference type="ChEBI" id="CHEBI:456215"/>
    </reaction>
    <physiologicalReaction direction="left-to-right" evidence="2">
        <dbReference type="Rhea" id="RHEA:74976"/>
    </physiologicalReaction>
</comment>
<comment type="cofactor">
    <cofactor evidence="4">
        <name>Mg(2+)</name>
        <dbReference type="ChEBI" id="CHEBI:18420"/>
    </cofactor>
</comment>
<comment type="pathway">
    <text evidence="3">Lipid metabolism; fatty acid metabolism.</text>
</comment>
<comment type="subunit">
    <text evidence="3">Homodimer.</text>
</comment>
<comment type="subcellular location">
    <subcellularLocation>
        <location evidence="3">Cytoplasm</location>
    </subcellularLocation>
</comment>
<comment type="similarity">
    <text evidence="5">Belongs to the ATP-dependent AMP-binding enzyme family.</text>
</comment>
<reference key="1">
    <citation type="journal article" date="2002" name="J. Bacteriol.">
        <title>Whole-genome comparison of Mycobacterium tuberculosis clinical and laboratory strains.</title>
        <authorList>
            <person name="Fleischmann R.D."/>
            <person name="Alland D."/>
            <person name="Eisen J.A."/>
            <person name="Carpenter L."/>
            <person name="White O."/>
            <person name="Peterson J.D."/>
            <person name="DeBoy R.T."/>
            <person name="Dodson R.J."/>
            <person name="Gwinn M.L."/>
            <person name="Haft D.H."/>
            <person name="Hickey E.K."/>
            <person name="Kolonay J.F."/>
            <person name="Nelson W.C."/>
            <person name="Umayam L.A."/>
            <person name="Ermolaeva M.D."/>
            <person name="Salzberg S.L."/>
            <person name="Delcher A."/>
            <person name="Utterback T.R."/>
            <person name="Weidman J.F."/>
            <person name="Khouri H.M."/>
            <person name="Gill J."/>
            <person name="Mikula A."/>
            <person name="Bishai W."/>
            <person name="Jacobs W.R. Jr."/>
            <person name="Venter J.C."/>
            <person name="Fraser C.M."/>
        </authorList>
    </citation>
    <scope>NUCLEOTIDE SEQUENCE [LARGE SCALE GENOMIC DNA]</scope>
    <source>
        <strain>CDC 1551 / Oshkosh</strain>
    </source>
</reference>
<dbReference type="EC" id="6.2.1.20" evidence="3"/>
<dbReference type="EC" id="6.2.1.47" evidence="3"/>
<dbReference type="EMBL" id="AE000516">
    <property type="protein sequence ID" value="AAK44330.1"/>
    <property type="molecule type" value="Genomic_DNA"/>
</dbReference>
<dbReference type="PIR" id="C70751">
    <property type="entry name" value="C70751"/>
</dbReference>
<dbReference type="SMR" id="P9WQ54"/>
<dbReference type="KEGG" id="mtc:MT0108"/>
<dbReference type="PATRIC" id="fig|83331.31.peg.113"/>
<dbReference type="HOGENOM" id="CLU_000022_59_0_11"/>
<dbReference type="UniPathway" id="UPA00199"/>
<dbReference type="Proteomes" id="UP000001020">
    <property type="component" value="Chromosome"/>
</dbReference>
<dbReference type="GO" id="GO:0005737">
    <property type="term" value="C:cytoplasm"/>
    <property type="evidence" value="ECO:0007669"/>
    <property type="project" value="UniProtKB-SubCell"/>
</dbReference>
<dbReference type="GO" id="GO:0005524">
    <property type="term" value="F:ATP binding"/>
    <property type="evidence" value="ECO:0007669"/>
    <property type="project" value="UniProtKB-KW"/>
</dbReference>
<dbReference type="GO" id="GO:0008922">
    <property type="term" value="F:long-chain fatty acid [acyl-carrier-protein] ligase activity"/>
    <property type="evidence" value="ECO:0007669"/>
    <property type="project" value="UniProtKB-EC"/>
</dbReference>
<dbReference type="GO" id="GO:0046872">
    <property type="term" value="F:metal ion binding"/>
    <property type="evidence" value="ECO:0007669"/>
    <property type="project" value="UniProtKB-KW"/>
</dbReference>
<dbReference type="GO" id="GO:0006631">
    <property type="term" value="P:fatty acid metabolic process"/>
    <property type="evidence" value="ECO:0007669"/>
    <property type="project" value="UniProtKB-UniPathway"/>
</dbReference>
<dbReference type="CDD" id="cd17635">
    <property type="entry name" value="FADD10"/>
    <property type="match status" value="1"/>
</dbReference>
<dbReference type="FunFam" id="3.40.50.12780:FF:000081">
    <property type="entry name" value="Possible fatty-acid-CoA ligase fadD10"/>
    <property type="match status" value="1"/>
</dbReference>
<dbReference type="Gene3D" id="3.30.300.30">
    <property type="match status" value="1"/>
</dbReference>
<dbReference type="Gene3D" id="3.40.50.12780">
    <property type="entry name" value="N-terminal domain of ligase-like"/>
    <property type="match status" value="1"/>
</dbReference>
<dbReference type="InterPro" id="IPR025110">
    <property type="entry name" value="AMP-bd_C"/>
</dbReference>
<dbReference type="InterPro" id="IPR045851">
    <property type="entry name" value="AMP-bd_C_sf"/>
</dbReference>
<dbReference type="InterPro" id="IPR020845">
    <property type="entry name" value="AMP-binding_CS"/>
</dbReference>
<dbReference type="InterPro" id="IPR000873">
    <property type="entry name" value="AMP-dep_synth/lig_dom"/>
</dbReference>
<dbReference type="InterPro" id="IPR042099">
    <property type="entry name" value="ANL_N_sf"/>
</dbReference>
<dbReference type="InterPro" id="IPR050237">
    <property type="entry name" value="ATP-dep_AMP-bd_enzyme"/>
</dbReference>
<dbReference type="NCBIfam" id="NF004515">
    <property type="entry name" value="PRK05857.1"/>
    <property type="match status" value="1"/>
</dbReference>
<dbReference type="PANTHER" id="PTHR43767">
    <property type="entry name" value="LONG-CHAIN-FATTY-ACID--COA LIGASE"/>
    <property type="match status" value="1"/>
</dbReference>
<dbReference type="PANTHER" id="PTHR43767:SF1">
    <property type="entry name" value="NONRIBOSOMAL PEPTIDE SYNTHASE PES1 (EUROFUNG)-RELATED"/>
    <property type="match status" value="1"/>
</dbReference>
<dbReference type="Pfam" id="PF00501">
    <property type="entry name" value="AMP-binding"/>
    <property type="match status" value="1"/>
</dbReference>
<dbReference type="Pfam" id="PF13193">
    <property type="entry name" value="AMP-binding_C"/>
    <property type="match status" value="1"/>
</dbReference>
<dbReference type="SUPFAM" id="SSF56801">
    <property type="entry name" value="Acetyl-CoA synthetase-like"/>
    <property type="match status" value="1"/>
</dbReference>
<dbReference type="PROSITE" id="PS00455">
    <property type="entry name" value="AMP_BINDING"/>
    <property type="match status" value="1"/>
</dbReference>
<sequence>MGGKKFQAMPQLPSTVLDRVFEQARQQPEAIALRRCDGTSALRYRELVAEVGGLAADLRAQSVSRGSRVLVISDNGPETYLSVLACAKLGAIAVMADGNLPIAAIERFCQITDPAAALVAPGSKMASSAVPEALHSIPVIAVDIAAVTRESEHSLDAASLAGNADQGSEDPLAMIFTSGTTGEPKAVLLANRTFFAVPDILQKEGLNWVTWVVGETTYSPLPATHIGGLWWILTCLMHGGLCVTGGENTTSLLEILTTNAVATTCLVPTLLSKLVSELKSANATVPSLRLVGYGGSRAIAADVRFIEATGVRTAQVYGLSETGCTALCLPTDDGSIVKIEAGAVGRPYPGVDVYLAATDGIGPTAPGAGPSASFGTLWIKSPANMLGYWNNPERTAEVLIDGWVNTGDLLERREDGFFYIKGRSSEMIICGGVNIAPDEVDRIAEGVSGVREAACYEIPDEEFGALVGLAVVASAELDESAARALKHTIAARFRRESEPMARPSTIVIVTDIPRTQSGKVMRASLAAAATADKARVVVRG</sequence>
<evidence type="ECO:0000250" key="1">
    <source>
        <dbReference type="UniProtKB" id="B2HKM1"/>
    </source>
</evidence>
<evidence type="ECO:0000250" key="2">
    <source>
        <dbReference type="UniProtKB" id="P0DX14"/>
    </source>
</evidence>
<evidence type="ECO:0000250" key="3">
    <source>
        <dbReference type="UniProtKB" id="P9WQ55"/>
    </source>
</evidence>
<evidence type="ECO:0000250" key="4">
    <source>
        <dbReference type="UniProtKB" id="Q5SKN9"/>
    </source>
</evidence>
<evidence type="ECO:0000305" key="5"/>
<organism>
    <name type="scientific">Mycobacterium tuberculosis (strain CDC 1551 / Oshkosh)</name>
    <dbReference type="NCBI Taxonomy" id="83331"/>
    <lineage>
        <taxon>Bacteria</taxon>
        <taxon>Bacillati</taxon>
        <taxon>Actinomycetota</taxon>
        <taxon>Actinomycetes</taxon>
        <taxon>Mycobacteriales</taxon>
        <taxon>Mycobacteriaceae</taxon>
        <taxon>Mycobacterium</taxon>
        <taxon>Mycobacterium tuberculosis complex</taxon>
    </lineage>
</organism>
<gene>
    <name type="primary">fadD10</name>
    <name type="ordered locus">MT0108</name>
</gene>
<proteinExistence type="inferred from homology"/>
<keyword id="KW-0067">ATP-binding</keyword>
<keyword id="KW-0963">Cytoplasm</keyword>
<keyword id="KW-0276">Fatty acid metabolism</keyword>
<keyword id="KW-0436">Ligase</keyword>
<keyword id="KW-0443">Lipid metabolism</keyword>
<keyword id="KW-0460">Magnesium</keyword>
<keyword id="KW-0479">Metal-binding</keyword>
<keyword id="KW-0547">Nucleotide-binding</keyword>
<keyword id="KW-1185">Reference proteome</keyword>
<name>INLPC_MYCTO</name>
<feature type="chain" id="PRO_0000426835" description="Medium/long-chain-fatty-acid--[acyl-carrier-protein] ligase FadD10">
    <location>
        <begin position="1"/>
        <end position="540"/>
    </location>
</feature>
<feature type="binding site" evidence="4">
    <location>
        <position position="177"/>
    </location>
    <ligand>
        <name>Mg(2+)</name>
        <dbReference type="ChEBI" id="CHEBI:18420"/>
    </ligand>
</feature>
<feature type="binding site" evidence="4">
    <location>
        <position position="226"/>
    </location>
    <ligand>
        <name>ATP</name>
        <dbReference type="ChEBI" id="CHEBI:30616"/>
    </ligand>
</feature>
<feature type="binding site" evidence="4">
    <location>
        <position position="316"/>
    </location>
    <ligand>
        <name>ATP</name>
        <dbReference type="ChEBI" id="CHEBI:30616"/>
    </ligand>
</feature>
<feature type="binding site" evidence="4">
    <location>
        <position position="320"/>
    </location>
    <ligand>
        <name>ATP</name>
        <dbReference type="ChEBI" id="CHEBI:30616"/>
    </ligand>
</feature>
<feature type="binding site" evidence="4">
    <location>
        <position position="321"/>
    </location>
    <ligand>
        <name>Mg(2+)</name>
        <dbReference type="ChEBI" id="CHEBI:18420"/>
    </ligand>
</feature>
<feature type="binding site" evidence="4">
    <location>
        <position position="408"/>
    </location>
    <ligand>
        <name>ATP</name>
        <dbReference type="ChEBI" id="CHEBI:30616"/>
    </ligand>
</feature>
<accession>P9WQ54</accession>
<accession>F2GLP5</accession>
<accession>L0T2G2</accession>
<accession>Q10878</accession>
<accession>Q7DAH0</accession>
<protein>
    <recommendedName>
        <fullName evidence="3">Medium/long-chain-fatty-acid--[acyl-carrier-protein] ligase FadD10</fullName>
        <ecNumber evidence="3">6.2.1.20</ecNumber>
        <ecNumber evidence="3">6.2.1.47</ecNumber>
    </recommendedName>
</protein>